<keyword id="KW-0004">4Fe-4S</keyword>
<keyword id="KW-0342">GTP-binding</keyword>
<keyword id="KW-0408">Iron</keyword>
<keyword id="KW-0411">Iron-sulfur</keyword>
<keyword id="KW-0456">Lyase</keyword>
<keyword id="KW-0479">Metal-binding</keyword>
<keyword id="KW-0501">Molybdenum cofactor biosynthesis</keyword>
<keyword id="KW-0547">Nucleotide-binding</keyword>
<keyword id="KW-1185">Reference proteome</keyword>
<keyword id="KW-0949">S-adenosyl-L-methionine</keyword>
<sequence length="332" mass="36255">MAASELIDTFGRRISYLRLSVTDRCDLRCTYCMPERMQFLPRAEVLTLEELRDLAVGFMRRGITKIRLTGGEPLVRRDVVDLIRALGRHVGDGLEELTLTTNGTQLAGHAQAIADAGVKRINISLDTLDRATFQRLSRRDALASVLGGIAAAKAAGLKIKINTVAMKGVNGHEIPALIEWAHGEGHDVTLIETMPLGEVDEDRTDQFLPLVAVRESLEARWTLTDSDHRTGGPSRYVEVAETGGRLGFITPLTNNFCAGCNRVRVTATGQLYPCLGGGERVDLRAALRSDDPDSNLSTALDTAMKIKPERHDFRIGEGEEPALARHMSMTGG</sequence>
<proteinExistence type="inferred from homology"/>
<reference key="1">
    <citation type="journal article" date="2009" name="J. Bacteriol.">
        <title>Complete genome sequence of Erythrobacter litoralis HTCC2594.</title>
        <authorList>
            <person name="Oh H.M."/>
            <person name="Giovannoni S.J."/>
            <person name="Ferriera S."/>
            <person name="Johnson J."/>
            <person name="Cho J.C."/>
        </authorList>
    </citation>
    <scope>NUCLEOTIDE SEQUENCE [LARGE SCALE GENOMIC DNA]</scope>
    <source>
        <strain>HTCC2594</strain>
    </source>
</reference>
<evidence type="ECO:0000255" key="1">
    <source>
        <dbReference type="HAMAP-Rule" id="MF_01225"/>
    </source>
</evidence>
<evidence type="ECO:0000255" key="2">
    <source>
        <dbReference type="PROSITE-ProRule" id="PRU01266"/>
    </source>
</evidence>
<gene>
    <name evidence="1" type="primary">moaA</name>
    <name type="ordered locus">ELI_02780</name>
</gene>
<dbReference type="EC" id="4.1.99.22" evidence="1"/>
<dbReference type="EMBL" id="CP000157">
    <property type="protein sequence ID" value="ABC62648.1"/>
    <property type="molecule type" value="Genomic_DNA"/>
</dbReference>
<dbReference type="RefSeq" id="WP_011413524.1">
    <property type="nucleotide sequence ID" value="NC_007722.1"/>
</dbReference>
<dbReference type="SMR" id="Q2NCE3"/>
<dbReference type="STRING" id="314225.ELI_02780"/>
<dbReference type="KEGG" id="eli:ELI_02780"/>
<dbReference type="eggNOG" id="COG2896">
    <property type="taxonomic scope" value="Bacteria"/>
</dbReference>
<dbReference type="HOGENOM" id="CLU_009273_0_1_5"/>
<dbReference type="OrthoDB" id="9763993at2"/>
<dbReference type="UniPathway" id="UPA00344"/>
<dbReference type="Proteomes" id="UP000008808">
    <property type="component" value="Chromosome"/>
</dbReference>
<dbReference type="GO" id="GO:0051539">
    <property type="term" value="F:4 iron, 4 sulfur cluster binding"/>
    <property type="evidence" value="ECO:0007669"/>
    <property type="project" value="UniProtKB-UniRule"/>
</dbReference>
<dbReference type="GO" id="GO:0061799">
    <property type="term" value="F:cyclic pyranopterin monophosphate synthase activity"/>
    <property type="evidence" value="ECO:0007669"/>
    <property type="project" value="TreeGrafter"/>
</dbReference>
<dbReference type="GO" id="GO:0061798">
    <property type="term" value="F:GTP 3',8'-cyclase activity"/>
    <property type="evidence" value="ECO:0007669"/>
    <property type="project" value="UniProtKB-UniRule"/>
</dbReference>
<dbReference type="GO" id="GO:0005525">
    <property type="term" value="F:GTP binding"/>
    <property type="evidence" value="ECO:0007669"/>
    <property type="project" value="UniProtKB-UniRule"/>
</dbReference>
<dbReference type="GO" id="GO:0046872">
    <property type="term" value="F:metal ion binding"/>
    <property type="evidence" value="ECO:0007669"/>
    <property type="project" value="UniProtKB-KW"/>
</dbReference>
<dbReference type="GO" id="GO:1904047">
    <property type="term" value="F:S-adenosyl-L-methionine binding"/>
    <property type="evidence" value="ECO:0007669"/>
    <property type="project" value="UniProtKB-UniRule"/>
</dbReference>
<dbReference type="GO" id="GO:0006777">
    <property type="term" value="P:Mo-molybdopterin cofactor biosynthetic process"/>
    <property type="evidence" value="ECO:0007669"/>
    <property type="project" value="UniProtKB-UniRule"/>
</dbReference>
<dbReference type="CDD" id="cd01335">
    <property type="entry name" value="Radical_SAM"/>
    <property type="match status" value="1"/>
</dbReference>
<dbReference type="CDD" id="cd21117">
    <property type="entry name" value="Twitch_MoaA"/>
    <property type="match status" value="1"/>
</dbReference>
<dbReference type="Gene3D" id="3.20.20.70">
    <property type="entry name" value="Aldolase class I"/>
    <property type="match status" value="1"/>
</dbReference>
<dbReference type="HAMAP" id="MF_01225_B">
    <property type="entry name" value="MoaA_B"/>
    <property type="match status" value="1"/>
</dbReference>
<dbReference type="InterPro" id="IPR013785">
    <property type="entry name" value="Aldolase_TIM"/>
</dbReference>
<dbReference type="InterPro" id="IPR006638">
    <property type="entry name" value="Elp3/MiaA/NifB-like_rSAM"/>
</dbReference>
<dbReference type="InterPro" id="IPR013483">
    <property type="entry name" value="MoaA"/>
</dbReference>
<dbReference type="InterPro" id="IPR000385">
    <property type="entry name" value="MoaA_NifB_PqqE_Fe-S-bd_CS"/>
</dbReference>
<dbReference type="InterPro" id="IPR010505">
    <property type="entry name" value="MoaA_twitch"/>
</dbReference>
<dbReference type="InterPro" id="IPR050105">
    <property type="entry name" value="MoCo_biosynth_MoaA/MoaC"/>
</dbReference>
<dbReference type="InterPro" id="IPR007197">
    <property type="entry name" value="rSAM"/>
</dbReference>
<dbReference type="NCBIfam" id="TIGR02666">
    <property type="entry name" value="moaA"/>
    <property type="match status" value="1"/>
</dbReference>
<dbReference type="PANTHER" id="PTHR22960:SF0">
    <property type="entry name" value="MOLYBDENUM COFACTOR BIOSYNTHESIS PROTEIN 1"/>
    <property type="match status" value="1"/>
</dbReference>
<dbReference type="PANTHER" id="PTHR22960">
    <property type="entry name" value="MOLYBDOPTERIN COFACTOR SYNTHESIS PROTEIN A"/>
    <property type="match status" value="1"/>
</dbReference>
<dbReference type="Pfam" id="PF13353">
    <property type="entry name" value="Fer4_12"/>
    <property type="match status" value="1"/>
</dbReference>
<dbReference type="Pfam" id="PF06463">
    <property type="entry name" value="Mob_synth_C"/>
    <property type="match status" value="1"/>
</dbReference>
<dbReference type="Pfam" id="PF04055">
    <property type="entry name" value="Radical_SAM"/>
    <property type="match status" value="1"/>
</dbReference>
<dbReference type="SFLD" id="SFLDG01383">
    <property type="entry name" value="cyclic_pyranopterin_phosphate"/>
    <property type="match status" value="1"/>
</dbReference>
<dbReference type="SFLD" id="SFLDG01216">
    <property type="entry name" value="thioether_bond_formation_requi"/>
    <property type="match status" value="1"/>
</dbReference>
<dbReference type="SMART" id="SM00729">
    <property type="entry name" value="Elp3"/>
    <property type="match status" value="1"/>
</dbReference>
<dbReference type="SUPFAM" id="SSF102114">
    <property type="entry name" value="Radical SAM enzymes"/>
    <property type="match status" value="1"/>
</dbReference>
<dbReference type="PROSITE" id="PS01305">
    <property type="entry name" value="MOAA_NIFB_PQQE"/>
    <property type="match status" value="1"/>
</dbReference>
<dbReference type="PROSITE" id="PS51918">
    <property type="entry name" value="RADICAL_SAM"/>
    <property type="match status" value="1"/>
</dbReference>
<name>MOAA_ERYLH</name>
<organism>
    <name type="scientific">Erythrobacter litoralis (strain HTCC2594)</name>
    <dbReference type="NCBI Taxonomy" id="314225"/>
    <lineage>
        <taxon>Bacteria</taxon>
        <taxon>Pseudomonadati</taxon>
        <taxon>Pseudomonadota</taxon>
        <taxon>Alphaproteobacteria</taxon>
        <taxon>Sphingomonadales</taxon>
        <taxon>Erythrobacteraceae</taxon>
        <taxon>Erythrobacter/Porphyrobacter group</taxon>
        <taxon>Erythrobacter</taxon>
    </lineage>
</organism>
<feature type="chain" id="PRO_1000066810" description="GTP 3',8-cyclase">
    <location>
        <begin position="1"/>
        <end position="332"/>
    </location>
</feature>
<feature type="domain" description="Radical SAM core" evidence="2">
    <location>
        <begin position="9"/>
        <end position="234"/>
    </location>
</feature>
<feature type="binding site" evidence="1">
    <location>
        <position position="18"/>
    </location>
    <ligand>
        <name>GTP</name>
        <dbReference type="ChEBI" id="CHEBI:37565"/>
    </ligand>
</feature>
<feature type="binding site" evidence="1">
    <location>
        <position position="25"/>
    </location>
    <ligand>
        <name>[4Fe-4S] cluster</name>
        <dbReference type="ChEBI" id="CHEBI:49883"/>
        <label>1</label>
        <note>4Fe-4S-S-AdoMet</note>
    </ligand>
</feature>
<feature type="binding site" evidence="1">
    <location>
        <position position="29"/>
    </location>
    <ligand>
        <name>[4Fe-4S] cluster</name>
        <dbReference type="ChEBI" id="CHEBI:49883"/>
        <label>1</label>
        <note>4Fe-4S-S-AdoMet</note>
    </ligand>
</feature>
<feature type="binding site" evidence="1">
    <location>
        <position position="31"/>
    </location>
    <ligand>
        <name>S-adenosyl-L-methionine</name>
        <dbReference type="ChEBI" id="CHEBI:59789"/>
    </ligand>
</feature>
<feature type="binding site" evidence="1">
    <location>
        <position position="32"/>
    </location>
    <ligand>
        <name>[4Fe-4S] cluster</name>
        <dbReference type="ChEBI" id="CHEBI:49883"/>
        <label>1</label>
        <note>4Fe-4S-S-AdoMet</note>
    </ligand>
</feature>
<feature type="binding site" evidence="1">
    <location>
        <position position="67"/>
    </location>
    <ligand>
        <name>GTP</name>
        <dbReference type="ChEBI" id="CHEBI:37565"/>
    </ligand>
</feature>
<feature type="binding site" evidence="1">
    <location>
        <position position="71"/>
    </location>
    <ligand>
        <name>S-adenosyl-L-methionine</name>
        <dbReference type="ChEBI" id="CHEBI:59789"/>
    </ligand>
</feature>
<feature type="binding site" evidence="1">
    <location>
        <position position="100"/>
    </location>
    <ligand>
        <name>GTP</name>
        <dbReference type="ChEBI" id="CHEBI:37565"/>
    </ligand>
</feature>
<feature type="binding site" evidence="1">
    <location>
        <position position="124"/>
    </location>
    <ligand>
        <name>S-adenosyl-L-methionine</name>
        <dbReference type="ChEBI" id="CHEBI:59789"/>
    </ligand>
</feature>
<feature type="binding site" evidence="1">
    <location>
        <position position="160"/>
    </location>
    <ligand>
        <name>GTP</name>
        <dbReference type="ChEBI" id="CHEBI:37565"/>
    </ligand>
</feature>
<feature type="binding site" evidence="1">
    <location>
        <position position="194"/>
    </location>
    <ligand>
        <name>S-adenosyl-L-methionine</name>
        <dbReference type="ChEBI" id="CHEBI:59789"/>
    </ligand>
</feature>
<feature type="binding site" evidence="1">
    <location>
        <position position="257"/>
    </location>
    <ligand>
        <name>[4Fe-4S] cluster</name>
        <dbReference type="ChEBI" id="CHEBI:49883"/>
        <label>2</label>
        <note>4Fe-4S-substrate</note>
    </ligand>
</feature>
<feature type="binding site" evidence="1">
    <location>
        <position position="260"/>
    </location>
    <ligand>
        <name>[4Fe-4S] cluster</name>
        <dbReference type="ChEBI" id="CHEBI:49883"/>
        <label>2</label>
        <note>4Fe-4S-substrate</note>
    </ligand>
</feature>
<feature type="binding site" evidence="1">
    <location>
        <begin position="262"/>
        <end position="264"/>
    </location>
    <ligand>
        <name>GTP</name>
        <dbReference type="ChEBI" id="CHEBI:37565"/>
    </ligand>
</feature>
<feature type="binding site" evidence="1">
    <location>
        <position position="274"/>
    </location>
    <ligand>
        <name>[4Fe-4S] cluster</name>
        <dbReference type="ChEBI" id="CHEBI:49883"/>
        <label>2</label>
        <note>4Fe-4S-substrate</note>
    </ligand>
</feature>
<protein>
    <recommendedName>
        <fullName evidence="1">GTP 3',8-cyclase</fullName>
        <ecNumber evidence="1">4.1.99.22</ecNumber>
    </recommendedName>
    <alternativeName>
        <fullName evidence="1">Molybdenum cofactor biosynthesis protein A</fullName>
    </alternativeName>
</protein>
<comment type="function">
    <text evidence="1">Catalyzes the cyclization of GTP to (8S)-3',8-cyclo-7,8-dihydroguanosine 5'-triphosphate.</text>
</comment>
<comment type="catalytic activity">
    <reaction evidence="1">
        <text>GTP + AH2 + S-adenosyl-L-methionine = (8S)-3',8-cyclo-7,8-dihydroguanosine 5'-triphosphate + 5'-deoxyadenosine + L-methionine + A + H(+)</text>
        <dbReference type="Rhea" id="RHEA:49576"/>
        <dbReference type="ChEBI" id="CHEBI:13193"/>
        <dbReference type="ChEBI" id="CHEBI:15378"/>
        <dbReference type="ChEBI" id="CHEBI:17319"/>
        <dbReference type="ChEBI" id="CHEBI:17499"/>
        <dbReference type="ChEBI" id="CHEBI:37565"/>
        <dbReference type="ChEBI" id="CHEBI:57844"/>
        <dbReference type="ChEBI" id="CHEBI:59789"/>
        <dbReference type="ChEBI" id="CHEBI:131766"/>
        <dbReference type="EC" id="4.1.99.22"/>
    </reaction>
</comment>
<comment type="cofactor">
    <cofactor evidence="1">
        <name>[4Fe-4S] cluster</name>
        <dbReference type="ChEBI" id="CHEBI:49883"/>
    </cofactor>
    <text evidence="1">Binds 2 [4Fe-4S] clusters. Binds 1 [4Fe-4S] cluster coordinated with 3 cysteines and an exchangeable S-adenosyl-L-methionine and 1 [4Fe-4S] cluster coordinated with 3 cysteines and the GTP-derived substrate.</text>
</comment>
<comment type="pathway">
    <text evidence="1">Cofactor biosynthesis; molybdopterin biosynthesis.</text>
</comment>
<comment type="subunit">
    <text evidence="1">Monomer and homodimer.</text>
</comment>
<comment type="similarity">
    <text evidence="1">Belongs to the radical SAM superfamily. MoaA family.</text>
</comment>
<accession>Q2NCE3</accession>